<organism>
    <name type="scientific">Methanosarcina barkeri (strain Fusaro / DSM 804)</name>
    <dbReference type="NCBI Taxonomy" id="269797"/>
    <lineage>
        <taxon>Archaea</taxon>
        <taxon>Methanobacteriati</taxon>
        <taxon>Methanobacteriota</taxon>
        <taxon>Stenosarchaea group</taxon>
        <taxon>Methanomicrobia</taxon>
        <taxon>Methanosarcinales</taxon>
        <taxon>Methanosarcinaceae</taxon>
        <taxon>Methanosarcina</taxon>
    </lineage>
</organism>
<feature type="chain" id="PRO_1000061430" description="Probable deoxyuridine 5'-triphosphate nucleotidohydrolase">
    <location>
        <begin position="1"/>
        <end position="171"/>
    </location>
</feature>
<reference key="1">
    <citation type="journal article" date="2006" name="J. Bacteriol.">
        <title>The Methanosarcina barkeri genome: comparative analysis with Methanosarcina acetivorans and Methanosarcina mazei reveals extensive rearrangement within methanosarcinal genomes.</title>
        <authorList>
            <person name="Maeder D.L."/>
            <person name="Anderson I."/>
            <person name="Brettin T.S."/>
            <person name="Bruce D.C."/>
            <person name="Gilna P."/>
            <person name="Han C.S."/>
            <person name="Lapidus A."/>
            <person name="Metcalf W.W."/>
            <person name="Saunders E."/>
            <person name="Tapia R."/>
            <person name="Sowers K.R."/>
        </authorList>
    </citation>
    <scope>NUCLEOTIDE SEQUENCE [LARGE SCALE GENOMIC DNA]</scope>
    <source>
        <strain>Fusaro / DSM 804</strain>
    </source>
</reference>
<gene>
    <name evidence="1" type="primary">dut</name>
    <name type="ordered locus">Mbar_A0752</name>
</gene>
<keyword id="KW-0378">Hydrolase</keyword>
<keyword id="KW-0546">Nucleotide metabolism</keyword>
<name>DUT_METBF</name>
<evidence type="ECO:0000255" key="1">
    <source>
        <dbReference type="HAMAP-Rule" id="MF_00635"/>
    </source>
</evidence>
<dbReference type="EC" id="3.6.1.23" evidence="1"/>
<dbReference type="EMBL" id="CP000099">
    <property type="protein sequence ID" value="AAZ69730.1"/>
    <property type="molecule type" value="Genomic_DNA"/>
</dbReference>
<dbReference type="SMR" id="Q46EG2"/>
<dbReference type="STRING" id="269797.Mbar_A0752"/>
<dbReference type="PaxDb" id="269797-Mbar_A0752"/>
<dbReference type="KEGG" id="mba:Mbar_A0752"/>
<dbReference type="eggNOG" id="arCOG04048">
    <property type="taxonomic scope" value="Archaea"/>
</dbReference>
<dbReference type="HOGENOM" id="CLU_103451_2_0_2"/>
<dbReference type="OrthoDB" id="45265at2157"/>
<dbReference type="UniPathway" id="UPA00610">
    <property type="reaction ID" value="UER00666"/>
</dbReference>
<dbReference type="GO" id="GO:0008829">
    <property type="term" value="F:dCTP deaminase activity"/>
    <property type="evidence" value="ECO:0007669"/>
    <property type="project" value="InterPro"/>
</dbReference>
<dbReference type="GO" id="GO:0004170">
    <property type="term" value="F:dUTP diphosphatase activity"/>
    <property type="evidence" value="ECO:0007669"/>
    <property type="project" value="UniProtKB-UniRule"/>
</dbReference>
<dbReference type="GO" id="GO:0006226">
    <property type="term" value="P:dUMP biosynthetic process"/>
    <property type="evidence" value="ECO:0007669"/>
    <property type="project" value="UniProtKB-UniRule"/>
</dbReference>
<dbReference type="GO" id="GO:0006229">
    <property type="term" value="P:dUTP biosynthetic process"/>
    <property type="evidence" value="ECO:0007669"/>
    <property type="project" value="InterPro"/>
</dbReference>
<dbReference type="CDD" id="cd07557">
    <property type="entry name" value="trimeric_dUTPase"/>
    <property type="match status" value="1"/>
</dbReference>
<dbReference type="Gene3D" id="2.70.40.10">
    <property type="match status" value="1"/>
</dbReference>
<dbReference type="HAMAP" id="MF_00635">
    <property type="entry name" value="dUTPase_arch"/>
    <property type="match status" value="1"/>
</dbReference>
<dbReference type="InterPro" id="IPR011962">
    <property type="entry name" value="dCTP_deaminase"/>
</dbReference>
<dbReference type="InterPro" id="IPR036157">
    <property type="entry name" value="dUTPase-like_sf"/>
</dbReference>
<dbReference type="InterPro" id="IPR023537">
    <property type="entry name" value="dUTPase_archaeal"/>
</dbReference>
<dbReference type="InterPro" id="IPR033704">
    <property type="entry name" value="dUTPase_trimeric"/>
</dbReference>
<dbReference type="NCBIfam" id="NF002598">
    <property type="entry name" value="PRK02253.1"/>
    <property type="match status" value="1"/>
</dbReference>
<dbReference type="PANTHER" id="PTHR42680">
    <property type="entry name" value="DCTP DEAMINASE"/>
    <property type="match status" value="1"/>
</dbReference>
<dbReference type="PANTHER" id="PTHR42680:SF1">
    <property type="entry name" value="DEOXYURIDINE 5'-TRIPHOSPHATE NUCLEOTIDOHYDROLASE"/>
    <property type="match status" value="1"/>
</dbReference>
<dbReference type="Pfam" id="PF22769">
    <property type="entry name" value="DCD"/>
    <property type="match status" value="1"/>
</dbReference>
<dbReference type="SUPFAM" id="SSF51283">
    <property type="entry name" value="dUTPase-like"/>
    <property type="match status" value="1"/>
</dbReference>
<sequence length="171" mass="19100">MTLLSSTELRKLIQATPSLLENAIDIETQIQPNGLELTLKEVKTIDGSGAVDFDNSERQLPDGKTLEFGNDGWIHLPKGIYKVLFNEIVNIPMNLAAIAKPRSTLIRCGTTLETAVWDAGYRGRSESMLVVYNTEGFRLKKDARIMQLLFYTLGAEVEKGYSGIYQNENTK</sequence>
<protein>
    <recommendedName>
        <fullName evidence="1">Probable deoxyuridine 5'-triphosphate nucleotidohydrolase</fullName>
        <shortName evidence="1">dUTPase</shortName>
        <ecNumber evidence="1">3.6.1.23</ecNumber>
    </recommendedName>
    <alternativeName>
        <fullName evidence="1">dUTP pyrophosphatase</fullName>
    </alternativeName>
</protein>
<accession>Q46EG2</accession>
<comment type="function">
    <text evidence="1">This enzyme is involved in nucleotide metabolism: it produces dUMP, the immediate precursor of thymidine nucleotides and it decreases the intracellular concentration of dUTP so that uracil cannot be incorporated into DNA.</text>
</comment>
<comment type="catalytic activity">
    <reaction evidence="1">
        <text>dUTP + H2O = dUMP + diphosphate + H(+)</text>
        <dbReference type="Rhea" id="RHEA:10248"/>
        <dbReference type="ChEBI" id="CHEBI:15377"/>
        <dbReference type="ChEBI" id="CHEBI:15378"/>
        <dbReference type="ChEBI" id="CHEBI:33019"/>
        <dbReference type="ChEBI" id="CHEBI:61555"/>
        <dbReference type="ChEBI" id="CHEBI:246422"/>
        <dbReference type="EC" id="3.6.1.23"/>
    </reaction>
</comment>
<comment type="pathway">
    <text evidence="1">Pyrimidine metabolism; dUMP biosynthesis; dUMP from dCTP (dUTP route): step 2/2.</text>
</comment>
<comment type="similarity">
    <text evidence="1">Belongs to the dCTP deaminase family. Archaeal dUTPase subfamily.</text>
</comment>
<proteinExistence type="inferred from homology"/>